<protein>
    <recommendedName>
        <fullName>Nucleolar complex protein 4 homolog</fullName>
        <shortName>NOC4 protein homolog</shortName>
    </recommendedName>
    <alternativeName>
        <fullName>NOC4-like protein</fullName>
    </alternativeName>
    <alternativeName>
        <fullName>Nucleolar complex-associated protein 4-like protein</fullName>
    </alternativeName>
</protein>
<keyword id="KW-0472">Membrane</keyword>
<keyword id="KW-0539">Nucleus</keyword>
<keyword id="KW-1185">Reference proteome</keyword>
<keyword id="KW-0812">Transmembrane</keyword>
<keyword id="KW-1133">Transmembrane helix</keyword>
<feature type="chain" id="PRO_0000173486" description="Nucleolar complex protein 4 homolog">
    <location>
        <begin position="1"/>
        <end position="516"/>
    </location>
</feature>
<feature type="transmembrane region" description="Helical" evidence="2">
    <location>
        <begin position="296"/>
        <end position="316"/>
    </location>
</feature>
<feature type="transmembrane region" description="Helical" evidence="2">
    <location>
        <begin position="347"/>
        <end position="367"/>
    </location>
</feature>
<feature type="transmembrane region" description="Helical" evidence="2">
    <location>
        <begin position="375"/>
        <end position="395"/>
    </location>
</feature>
<gene>
    <name type="primary">Noc4l</name>
</gene>
<evidence type="ECO:0000250" key="1">
    <source>
        <dbReference type="UniProtKB" id="Q9BVI4"/>
    </source>
</evidence>
<evidence type="ECO:0000255" key="2"/>
<evidence type="ECO:0000305" key="3"/>
<comment type="subcellular location">
    <subcellularLocation>
        <location evidence="1">Nucleus membrane</location>
        <topology evidence="2">Multi-pass membrane protein</topology>
    </subcellularLocation>
    <subcellularLocation>
        <location evidence="1">Nucleus</location>
        <location evidence="1">Nucleolus</location>
    </subcellularLocation>
</comment>
<comment type="similarity">
    <text evidence="3">Belongs to the CBF/MAK21 family.</text>
</comment>
<organism>
    <name type="scientific">Rattus norvegicus</name>
    <name type="common">Rat</name>
    <dbReference type="NCBI Taxonomy" id="10116"/>
    <lineage>
        <taxon>Eukaryota</taxon>
        <taxon>Metazoa</taxon>
        <taxon>Chordata</taxon>
        <taxon>Craniata</taxon>
        <taxon>Vertebrata</taxon>
        <taxon>Euteleostomi</taxon>
        <taxon>Mammalia</taxon>
        <taxon>Eutheria</taxon>
        <taxon>Euarchontoglires</taxon>
        <taxon>Glires</taxon>
        <taxon>Rodentia</taxon>
        <taxon>Myomorpha</taxon>
        <taxon>Muroidea</taxon>
        <taxon>Muridae</taxon>
        <taxon>Murinae</taxon>
        <taxon>Rattus</taxon>
    </lineage>
</organism>
<proteinExistence type="evidence at transcript level"/>
<dbReference type="EMBL" id="BC088275">
    <property type="protein sequence ID" value="AAH88275.1"/>
    <property type="molecule type" value="mRNA"/>
</dbReference>
<dbReference type="RefSeq" id="NP_001014151.1">
    <property type="nucleotide sequence ID" value="NM_001014129.1"/>
</dbReference>
<dbReference type="SMR" id="Q5I0I8"/>
<dbReference type="FunCoup" id="Q5I0I8">
    <property type="interactions" value="2626"/>
</dbReference>
<dbReference type="STRING" id="10116.ENSRNOP00000053566"/>
<dbReference type="iPTMnet" id="Q5I0I8"/>
<dbReference type="PhosphoSitePlus" id="Q5I0I8"/>
<dbReference type="PaxDb" id="10116-ENSRNOP00000053566"/>
<dbReference type="GeneID" id="360828"/>
<dbReference type="KEGG" id="rno:360828"/>
<dbReference type="UCSC" id="RGD:1310661">
    <property type="organism name" value="rat"/>
</dbReference>
<dbReference type="AGR" id="RGD:1310661"/>
<dbReference type="CTD" id="79050"/>
<dbReference type="RGD" id="1310661">
    <property type="gene designation" value="Noc4l"/>
</dbReference>
<dbReference type="VEuPathDB" id="HostDB:ENSRNOG00000037478"/>
<dbReference type="eggNOG" id="KOG2154">
    <property type="taxonomic scope" value="Eukaryota"/>
</dbReference>
<dbReference type="HOGENOM" id="CLU_015945_3_0_1"/>
<dbReference type="InParanoid" id="Q5I0I8"/>
<dbReference type="OrthoDB" id="10263185at2759"/>
<dbReference type="PhylomeDB" id="Q5I0I8"/>
<dbReference type="TreeFam" id="TF105812"/>
<dbReference type="Reactome" id="R-RNO-6791226">
    <property type="pathway name" value="Major pathway of rRNA processing in the nucleolus and cytosol"/>
</dbReference>
<dbReference type="PRO" id="PR:Q5I0I8"/>
<dbReference type="Proteomes" id="UP000002494">
    <property type="component" value="Chromosome 12"/>
</dbReference>
<dbReference type="Bgee" id="ENSRNOG00000037478">
    <property type="expression patterns" value="Expressed in pancreas and 19 other cell types or tissues"/>
</dbReference>
<dbReference type="GO" id="GO:0030692">
    <property type="term" value="C:Noc4p-Nop14p complex"/>
    <property type="evidence" value="ECO:0000318"/>
    <property type="project" value="GO_Central"/>
</dbReference>
<dbReference type="GO" id="GO:0031965">
    <property type="term" value="C:nuclear membrane"/>
    <property type="evidence" value="ECO:0007669"/>
    <property type="project" value="UniProtKB-SubCell"/>
</dbReference>
<dbReference type="GO" id="GO:0005730">
    <property type="term" value="C:nucleolus"/>
    <property type="evidence" value="ECO:0000318"/>
    <property type="project" value="GO_Central"/>
</dbReference>
<dbReference type="GO" id="GO:0005654">
    <property type="term" value="C:nucleoplasm"/>
    <property type="evidence" value="ECO:0007669"/>
    <property type="project" value="Ensembl"/>
</dbReference>
<dbReference type="GO" id="GO:0032040">
    <property type="term" value="C:small-subunit processome"/>
    <property type="evidence" value="ECO:0000318"/>
    <property type="project" value="GO_Central"/>
</dbReference>
<dbReference type="GO" id="GO:0042254">
    <property type="term" value="P:ribosome biogenesis"/>
    <property type="evidence" value="ECO:0007669"/>
    <property type="project" value="InterPro"/>
</dbReference>
<dbReference type="InterPro" id="IPR016024">
    <property type="entry name" value="ARM-type_fold"/>
</dbReference>
<dbReference type="InterPro" id="IPR005612">
    <property type="entry name" value="CCAAT-binding_factor"/>
</dbReference>
<dbReference type="InterPro" id="IPR027193">
    <property type="entry name" value="Noc4"/>
</dbReference>
<dbReference type="PANTHER" id="PTHR12455">
    <property type="entry name" value="NUCLEOLAR COMPLEX PROTEIN 4"/>
    <property type="match status" value="1"/>
</dbReference>
<dbReference type="PANTHER" id="PTHR12455:SF0">
    <property type="entry name" value="NUCLEOLAR COMPLEX PROTEIN 4 HOMOLOG"/>
    <property type="match status" value="1"/>
</dbReference>
<dbReference type="Pfam" id="PF03914">
    <property type="entry name" value="CBF"/>
    <property type="match status" value="1"/>
</dbReference>
<dbReference type="SUPFAM" id="SSF48371">
    <property type="entry name" value="ARM repeat"/>
    <property type="match status" value="1"/>
</dbReference>
<reference key="1">
    <citation type="journal article" date="2004" name="Genome Res.">
        <title>The status, quality, and expansion of the NIH full-length cDNA project: the Mammalian Gene Collection (MGC).</title>
        <authorList>
            <consortium name="The MGC Project Team"/>
        </authorList>
    </citation>
    <scope>NUCLEOTIDE SEQUENCE [LARGE SCALE MRNA]</scope>
    <source>
        <tissue>Thymus</tissue>
    </source>
</reference>
<accession>Q5I0I8</accession>
<name>NOC4L_RAT</name>
<sequence length="516" mass="58862">MERQPASTGSRQELGRLLEAVLSNRGRANAVFDILAVLQSEDPEEIKEGVRTCSRLFGTLLEREELFVGSLPCEDMALAGSQGATYKYKVWMRHRYHSCCNRLEELLTHPSFQVKELALETLMKFVQLEGAKPLEKPQWESHYLFPRTLFRAVVGGLLTPEDDHSLLISQFCEYLEYDDIRYHAMQVATSILARATSRQPEVSLTFWNNAFTLLSAVNLPLQEHELTNFYVKHAQTSSKWKVVHLKEQRKAFQEMWLGFLKHKLPLSLYKKVLVAMHDSILPHLAQPTLMIDFLTSACDVGGAISLLALNGLFILIHKHNLEYPDFYQRLYGLLDPSIFHVKYRARFFHLADLFLSSSHLPAYLVAAFAKRLARLALTAPPEALLMVLPLICNLLRRHPACRVMVHRPQGPELDADPYDPTEKDPARSRALESCLWELQTLQQHYHPEVSRAASVINQALSVPEVSIAPLLELTAYEIFEQDLKKMMPESVPLEFIPAKGLLGRQDDLCTQFFCLS</sequence>